<accession>D7BPX0</accession>
<dbReference type="EC" id="4.2.1.-"/>
<dbReference type="EC" id="4.2.1.39"/>
<dbReference type="EMBL" id="CP002047">
    <property type="protein sequence ID" value="ADI04977.1"/>
    <property type="molecule type" value="Genomic_DNA"/>
</dbReference>
<dbReference type="SMR" id="D7BPX0"/>
<dbReference type="STRING" id="749414.SBI_01856"/>
<dbReference type="KEGG" id="sbh:SBI_01856"/>
<dbReference type="PATRIC" id="fig|749414.3.peg.1920"/>
<dbReference type="eggNOG" id="COG4948">
    <property type="taxonomic scope" value="Bacteria"/>
</dbReference>
<dbReference type="HOGENOM" id="CLU_030273_6_1_11"/>
<dbReference type="Proteomes" id="UP000000377">
    <property type="component" value="Chromosome"/>
</dbReference>
<dbReference type="GO" id="GO:0047929">
    <property type="term" value="F:gluconate dehydratase activity"/>
    <property type="evidence" value="ECO:0000314"/>
    <property type="project" value="UniProtKB"/>
</dbReference>
<dbReference type="GO" id="GO:0000287">
    <property type="term" value="F:magnesium ion binding"/>
    <property type="evidence" value="ECO:0000314"/>
    <property type="project" value="UniProtKB"/>
</dbReference>
<dbReference type="GO" id="GO:0016052">
    <property type="term" value="P:carbohydrate catabolic process"/>
    <property type="evidence" value="ECO:0000314"/>
    <property type="project" value="UniProtKB"/>
</dbReference>
<dbReference type="Gene3D" id="3.20.20.120">
    <property type="entry name" value="Enolase-like C-terminal domain"/>
    <property type="match status" value="1"/>
</dbReference>
<dbReference type="Gene3D" id="3.30.390.10">
    <property type="entry name" value="Enolase-like, N-terminal domain"/>
    <property type="match status" value="1"/>
</dbReference>
<dbReference type="InterPro" id="IPR034589">
    <property type="entry name" value="D-mannonate_dehydratase-like"/>
</dbReference>
<dbReference type="InterPro" id="IPR053379">
    <property type="entry name" value="D-mannonate_dehydratase_GalD"/>
</dbReference>
<dbReference type="InterPro" id="IPR034593">
    <property type="entry name" value="DgoD-like"/>
</dbReference>
<dbReference type="InterPro" id="IPR036849">
    <property type="entry name" value="Enolase-like_C_sf"/>
</dbReference>
<dbReference type="InterPro" id="IPR029017">
    <property type="entry name" value="Enolase-like_N"/>
</dbReference>
<dbReference type="InterPro" id="IPR029065">
    <property type="entry name" value="Enolase_C-like"/>
</dbReference>
<dbReference type="InterPro" id="IPR013342">
    <property type="entry name" value="Mandelate_racemase_C"/>
</dbReference>
<dbReference type="InterPro" id="IPR013341">
    <property type="entry name" value="Mandelate_racemase_N_dom"/>
</dbReference>
<dbReference type="NCBIfam" id="NF043051">
    <property type="entry name" value="ManoateDhtManD"/>
    <property type="match status" value="1"/>
</dbReference>
<dbReference type="NCBIfam" id="NF011654">
    <property type="entry name" value="PRK15072.1"/>
    <property type="match status" value="1"/>
</dbReference>
<dbReference type="PANTHER" id="PTHR48080">
    <property type="entry name" value="D-GALACTONATE DEHYDRATASE-RELATED"/>
    <property type="match status" value="1"/>
</dbReference>
<dbReference type="PANTHER" id="PTHR48080:SF6">
    <property type="entry name" value="STARVATION-SENSING PROTEIN RSPA"/>
    <property type="match status" value="1"/>
</dbReference>
<dbReference type="Pfam" id="PF13378">
    <property type="entry name" value="MR_MLE_C"/>
    <property type="match status" value="1"/>
</dbReference>
<dbReference type="Pfam" id="PF02746">
    <property type="entry name" value="MR_MLE_N"/>
    <property type="match status" value="1"/>
</dbReference>
<dbReference type="SFLD" id="SFLDS00001">
    <property type="entry name" value="Enolase"/>
    <property type="match status" value="1"/>
</dbReference>
<dbReference type="SFLD" id="SFLDG00033">
    <property type="entry name" value="mannonate_dehydratase"/>
    <property type="match status" value="1"/>
</dbReference>
<dbReference type="SMART" id="SM00922">
    <property type="entry name" value="MR_MLE"/>
    <property type="match status" value="1"/>
</dbReference>
<dbReference type="SUPFAM" id="SSF51604">
    <property type="entry name" value="Enolase C-terminal domain-like"/>
    <property type="match status" value="1"/>
</dbReference>
<dbReference type="SUPFAM" id="SSF54826">
    <property type="entry name" value="Enolase N-terminal domain-like"/>
    <property type="match status" value="1"/>
</dbReference>
<keyword id="KW-0119">Carbohydrate metabolism</keyword>
<keyword id="KW-0456">Lyase</keyword>
<keyword id="KW-0460">Magnesium</keyword>
<keyword id="KW-0479">Metal-binding</keyword>
<keyword id="KW-1185">Reference proteome</keyword>
<gene>
    <name type="ordered locus">SBI_01856</name>
</gene>
<protein>
    <recommendedName>
        <fullName>D-galactonate dehydratase family member SBI_01856</fullName>
        <ecNumber>4.2.1.-</ecNumber>
    </recommendedName>
    <alternativeName>
        <fullName>D-gluconate dehydratase</fullName>
        <ecNumber>4.2.1.39</ecNumber>
    </alternativeName>
</protein>
<sequence length="411" mass="45273">MSRPAHKTDTIVAVDVLVTSPGRNFVALKITTEQGLVGWGDATLNGRELAVASYLRDHVAPLLIGRDPARIEDTWQYLYRGAYWRRGPVTMTSIGAVDLALWDIKGKATGQPVYQLLGGAVRDRILTYTHASGWEIPQLLDAVDERREQGFLAVRAQSGIPGLATVYGVSSGEAGYEPADRGAAPAVEVWDTDSYLRHAPRVLAAVREHVGPELKLLHDAHHRLTPGQAARLGRALEEVDLYWLEDVTPAENQEVLRHIRHHTTVPLAIGEVFNTVWECQTLITEQLIDFVRTCVTHAGGISHLRRIAALAEVWQVRLGPHGPSDVSPVALAASLHVGLATPNFAIQEYMGYEPVVHEVFRHAWSYADGHLHPGDQPGLGVEVDEALAARFPYEPAYLPIARRRDGSMTDW</sequence>
<proteinExistence type="evidence at protein level"/>
<evidence type="ECO:0000250" key="1"/>
<evidence type="ECO:0000269" key="2">
    <source>
    </source>
</evidence>
<evidence type="ECO:0000305" key="3"/>
<reference key="1">
    <citation type="journal article" date="2010" name="J. Bacteriol.">
        <title>Genome sequence of the milbemycin-producing bacterium Streptomyces bingchenggensis.</title>
        <authorList>
            <person name="Wang X.J."/>
            <person name="Yan Y.J."/>
            <person name="Zhang B."/>
            <person name="An J."/>
            <person name="Wang J.J."/>
            <person name="Tian J."/>
            <person name="Jiang L."/>
            <person name="Chen Y.H."/>
            <person name="Huang S.X."/>
            <person name="Yin M."/>
            <person name="Zhang J."/>
            <person name="Gao A.L."/>
            <person name="Liu C.X."/>
            <person name="Zhu Z.X."/>
            <person name="Xiang W.S."/>
        </authorList>
    </citation>
    <scope>NUCLEOTIDE SEQUENCE [LARGE SCALE GENOMIC DNA]</scope>
    <source>
        <strain>BCW-1</strain>
    </source>
</reference>
<reference key="2">
    <citation type="journal article" date="2014" name="Biochemistry">
        <title>Discovery of function in the enolase superfamily: D-mannonate and D-gluconate dehydratases in the D-mannonate dehydratase subgroup.</title>
        <authorList>
            <person name="Wichelecki D.J."/>
            <person name="Balthazor B.M."/>
            <person name="Chau A.C."/>
            <person name="Vetting M.W."/>
            <person name="Fedorov A.A."/>
            <person name="Fedorov E.V."/>
            <person name="Lukk T."/>
            <person name="Patskovsky Y.V."/>
            <person name="Stead M.B."/>
            <person name="Hillerich B.S."/>
            <person name="Seidel R.D."/>
            <person name="Almo S.C."/>
            <person name="Gerlt J.A."/>
        </authorList>
    </citation>
    <scope>FUNCTION</scope>
    <scope>CATALYTIC ACTIVITY</scope>
    <scope>COFACTOR</scope>
    <scope>BIOPHYSICOCHEMICAL PROPERTIES</scope>
    <source>
        <strain>BCW-1</strain>
    </source>
</reference>
<organism>
    <name type="scientific">Streptomyces bingchenggensis (strain BCW-1)</name>
    <dbReference type="NCBI Taxonomy" id="749414"/>
    <lineage>
        <taxon>Bacteria</taxon>
        <taxon>Bacillati</taxon>
        <taxon>Actinomycetota</taxon>
        <taxon>Actinomycetes</taxon>
        <taxon>Kitasatosporales</taxon>
        <taxon>Streptomycetaceae</taxon>
        <taxon>Streptomyces</taxon>
    </lineage>
</organism>
<feature type="chain" id="PRO_0000429900" description="D-galactonate dehydratase family member SBI_01856">
    <location>
        <begin position="1"/>
        <end position="411"/>
    </location>
</feature>
<feature type="active site" description="Proton donor/acceptor" evidence="1">
    <location>
        <position position="167"/>
    </location>
</feature>
<feature type="active site" description="Proton donor/acceptor" evidence="1">
    <location>
        <position position="221"/>
    </location>
</feature>
<feature type="binding site" evidence="1">
    <location>
        <position position="45"/>
    </location>
    <ligand>
        <name>substrate</name>
    </ligand>
</feature>
<feature type="binding site" evidence="1">
    <location>
        <position position="130"/>
    </location>
    <ligand>
        <name>substrate</name>
    </ligand>
</feature>
<feature type="binding site" evidence="1">
    <location>
        <position position="219"/>
    </location>
    <ligand>
        <name>Mg(2+)</name>
        <dbReference type="ChEBI" id="CHEBI:18420"/>
    </ligand>
</feature>
<feature type="binding site" evidence="1">
    <location>
        <position position="245"/>
    </location>
    <ligand>
        <name>Mg(2+)</name>
        <dbReference type="ChEBI" id="CHEBI:18420"/>
    </ligand>
</feature>
<feature type="binding site" evidence="1">
    <location>
        <position position="271"/>
    </location>
    <ligand>
        <name>Mg(2+)</name>
        <dbReference type="ChEBI" id="CHEBI:18420"/>
    </ligand>
</feature>
<feature type="binding site" evidence="1">
    <location>
        <position position="271"/>
    </location>
    <ligand>
        <name>substrate</name>
    </ligand>
</feature>
<feature type="binding site" evidence="1">
    <location>
        <position position="292"/>
    </location>
    <ligand>
        <name>substrate</name>
    </ligand>
</feature>
<feature type="binding site" evidence="1">
    <location>
        <position position="321"/>
    </location>
    <ligand>
        <name>substrate</name>
    </ligand>
</feature>
<feature type="binding site" evidence="1">
    <location>
        <position position="325"/>
    </location>
    <ligand>
        <name>substrate</name>
    </ligand>
</feature>
<feature type="binding site" evidence="1">
    <location>
        <position position="348"/>
    </location>
    <ligand>
        <name>substrate</name>
    </ligand>
</feature>
<feature type="site" description="Important for activity and substrate specificity; Pro is observed in family members with low D-mannonate dehydratase activity" evidence="1">
    <location>
        <position position="323"/>
    </location>
</feature>
<comment type="function">
    <text evidence="2">Has low D-gluconate dehydratase activity (in vitro), suggesting that it has no significant role in D-gluconate degradation in vivo. Has no detectable activity with a panel of 70 other acid sugars (in vitro).</text>
</comment>
<comment type="catalytic activity">
    <reaction evidence="2">
        <text>D-gluconate = 2-dehydro-3-deoxy-D-gluconate + H2O</text>
        <dbReference type="Rhea" id="RHEA:21612"/>
        <dbReference type="ChEBI" id="CHEBI:15377"/>
        <dbReference type="ChEBI" id="CHEBI:18391"/>
        <dbReference type="ChEBI" id="CHEBI:57990"/>
        <dbReference type="EC" id="4.2.1.39"/>
    </reaction>
</comment>
<comment type="cofactor">
    <cofactor evidence="2">
        <name>Mg(2+)</name>
        <dbReference type="ChEBI" id="CHEBI:18420"/>
    </cofactor>
    <text evidence="2">Binds 1 Mg(2+) ion per subunit.</text>
</comment>
<comment type="biophysicochemical properties">
    <kinetics>
        <text evidence="2">kcat is 0.01 sec(-1) with D-gluconate.</text>
    </kinetics>
</comment>
<comment type="similarity">
    <text evidence="3">Belongs to the mandelate racemase/muconate lactonizing enzyme family. GalD subfamily.</text>
</comment>
<name>DGD_STRBB</name>